<comment type="function">
    <text evidence="1">Binds together with bS18 to 16S ribosomal RNA.</text>
</comment>
<comment type="similarity">
    <text evidence="1">Belongs to the bacterial ribosomal protein bS6 family.</text>
</comment>
<reference key="1">
    <citation type="journal article" date="2007" name="PLoS ONE">
        <title>Analysis of the neurotoxin complex genes in Clostridium botulinum A1-A4 and B1 strains: BoNT/A3, /Ba4 and /B1 clusters are located within plasmids.</title>
        <authorList>
            <person name="Smith T.J."/>
            <person name="Hill K.K."/>
            <person name="Foley B.T."/>
            <person name="Detter J.C."/>
            <person name="Munk A.C."/>
            <person name="Bruce D.C."/>
            <person name="Doggett N.A."/>
            <person name="Smith L.A."/>
            <person name="Marks J.D."/>
            <person name="Xie G."/>
            <person name="Brettin T.S."/>
        </authorList>
    </citation>
    <scope>NUCLEOTIDE SEQUENCE [LARGE SCALE GENOMIC DNA]</scope>
    <source>
        <strain>Loch Maree / Type A3</strain>
    </source>
</reference>
<feature type="chain" id="PRO_1000120729" description="Small ribosomal subunit protein bS6">
    <location>
        <begin position="1"/>
        <end position="94"/>
    </location>
</feature>
<keyword id="KW-0687">Ribonucleoprotein</keyword>
<keyword id="KW-0689">Ribosomal protein</keyword>
<keyword id="KW-0694">RNA-binding</keyword>
<keyword id="KW-0699">rRNA-binding</keyword>
<dbReference type="EMBL" id="CP000962">
    <property type="protein sequence ID" value="ACA56922.1"/>
    <property type="molecule type" value="Genomic_DNA"/>
</dbReference>
<dbReference type="RefSeq" id="WP_012344726.1">
    <property type="nucleotide sequence ID" value="NC_010520.1"/>
</dbReference>
<dbReference type="SMR" id="B1KU97"/>
<dbReference type="KEGG" id="cbl:CLK_3112"/>
<dbReference type="HOGENOM" id="CLU_113441_5_1_9"/>
<dbReference type="GO" id="GO:0005737">
    <property type="term" value="C:cytoplasm"/>
    <property type="evidence" value="ECO:0007669"/>
    <property type="project" value="UniProtKB-ARBA"/>
</dbReference>
<dbReference type="GO" id="GO:1990904">
    <property type="term" value="C:ribonucleoprotein complex"/>
    <property type="evidence" value="ECO:0007669"/>
    <property type="project" value="UniProtKB-KW"/>
</dbReference>
<dbReference type="GO" id="GO:0005840">
    <property type="term" value="C:ribosome"/>
    <property type="evidence" value="ECO:0007669"/>
    <property type="project" value="UniProtKB-KW"/>
</dbReference>
<dbReference type="GO" id="GO:0070181">
    <property type="term" value="F:small ribosomal subunit rRNA binding"/>
    <property type="evidence" value="ECO:0007669"/>
    <property type="project" value="TreeGrafter"/>
</dbReference>
<dbReference type="GO" id="GO:0003735">
    <property type="term" value="F:structural constituent of ribosome"/>
    <property type="evidence" value="ECO:0007669"/>
    <property type="project" value="InterPro"/>
</dbReference>
<dbReference type="GO" id="GO:0006412">
    <property type="term" value="P:translation"/>
    <property type="evidence" value="ECO:0007669"/>
    <property type="project" value="UniProtKB-UniRule"/>
</dbReference>
<dbReference type="CDD" id="cd00473">
    <property type="entry name" value="bS6"/>
    <property type="match status" value="1"/>
</dbReference>
<dbReference type="FunFam" id="3.30.70.60:FF:000002">
    <property type="entry name" value="30S ribosomal protein S6"/>
    <property type="match status" value="1"/>
</dbReference>
<dbReference type="Gene3D" id="3.30.70.60">
    <property type="match status" value="1"/>
</dbReference>
<dbReference type="HAMAP" id="MF_00360">
    <property type="entry name" value="Ribosomal_bS6"/>
    <property type="match status" value="1"/>
</dbReference>
<dbReference type="InterPro" id="IPR000529">
    <property type="entry name" value="Ribosomal_bS6"/>
</dbReference>
<dbReference type="InterPro" id="IPR035980">
    <property type="entry name" value="Ribosomal_bS6_sf"/>
</dbReference>
<dbReference type="InterPro" id="IPR020814">
    <property type="entry name" value="Ribosomal_S6_plastid/chlpt"/>
</dbReference>
<dbReference type="InterPro" id="IPR014717">
    <property type="entry name" value="Transl_elong_EF1B/ribsomal_bS6"/>
</dbReference>
<dbReference type="NCBIfam" id="TIGR00166">
    <property type="entry name" value="S6"/>
    <property type="match status" value="1"/>
</dbReference>
<dbReference type="PANTHER" id="PTHR21011">
    <property type="entry name" value="MITOCHONDRIAL 28S RIBOSOMAL PROTEIN S6"/>
    <property type="match status" value="1"/>
</dbReference>
<dbReference type="PANTHER" id="PTHR21011:SF1">
    <property type="entry name" value="SMALL RIBOSOMAL SUBUNIT PROTEIN BS6M"/>
    <property type="match status" value="1"/>
</dbReference>
<dbReference type="Pfam" id="PF01250">
    <property type="entry name" value="Ribosomal_S6"/>
    <property type="match status" value="1"/>
</dbReference>
<dbReference type="SUPFAM" id="SSF54995">
    <property type="entry name" value="Ribosomal protein S6"/>
    <property type="match status" value="1"/>
</dbReference>
<evidence type="ECO:0000255" key="1">
    <source>
        <dbReference type="HAMAP-Rule" id="MF_00360"/>
    </source>
</evidence>
<evidence type="ECO:0000305" key="2"/>
<gene>
    <name evidence="1" type="primary">rpsF</name>
    <name type="ordered locus">CLK_3112</name>
</gene>
<accession>B1KU97</accession>
<name>RS6_CLOBM</name>
<organism>
    <name type="scientific">Clostridium botulinum (strain Loch Maree / Type A3)</name>
    <dbReference type="NCBI Taxonomy" id="498214"/>
    <lineage>
        <taxon>Bacteria</taxon>
        <taxon>Bacillati</taxon>
        <taxon>Bacillota</taxon>
        <taxon>Clostridia</taxon>
        <taxon>Eubacteriales</taxon>
        <taxon>Clostridiaceae</taxon>
        <taxon>Clostridium</taxon>
    </lineage>
</organism>
<protein>
    <recommendedName>
        <fullName evidence="1">Small ribosomal subunit protein bS6</fullName>
    </recommendedName>
    <alternativeName>
        <fullName evidence="2">30S ribosomal protein S6</fullName>
    </alternativeName>
</protein>
<sequence length="94" mass="10921">MRKYETVFILNPALDEEGYKANVEKFKGVIENSGGTVDNVDLWGKRKLAYEVKKVSEGYYTLMNFTADTELPKELDRVFRITDTVIRHMIITQE</sequence>
<proteinExistence type="inferred from homology"/>